<evidence type="ECO:0000255" key="1">
    <source>
        <dbReference type="HAMAP-Rule" id="MF_00437"/>
    </source>
</evidence>
<reference key="1">
    <citation type="submission" date="2007-03" db="EMBL/GenBank/DDBJ databases">
        <title>Sequence analysis of Arabidopsis pumila JS2 chloroplast DNA.</title>
        <authorList>
            <person name="Hosouchi T."/>
            <person name="Tsuruoka H."/>
            <person name="Kotani H."/>
        </authorList>
    </citation>
    <scope>NUCLEOTIDE SEQUENCE [LARGE SCALE GENOMIC DNA]</scope>
</reference>
<proteinExistence type="inferred from homology"/>
<name>YCF4_OLIPU</name>
<protein>
    <recommendedName>
        <fullName evidence="1">Photosystem I assembly protein Ycf4</fullName>
    </recommendedName>
</protein>
<geneLocation type="chloroplast"/>
<feature type="chain" id="PRO_0000326020" description="Photosystem I assembly protein Ycf4">
    <location>
        <begin position="1"/>
        <end position="184"/>
    </location>
</feature>
<feature type="transmembrane region" description="Helical" evidence="1">
    <location>
        <begin position="22"/>
        <end position="42"/>
    </location>
</feature>
<feature type="transmembrane region" description="Helical" evidence="1">
    <location>
        <begin position="57"/>
        <end position="77"/>
    </location>
</feature>
<comment type="function">
    <text evidence="1">Seems to be required for the assembly of the photosystem I complex.</text>
</comment>
<comment type="subcellular location">
    <subcellularLocation>
        <location evidence="1">Plastid</location>
        <location evidence="1">Chloroplast thylakoid membrane</location>
        <topology evidence="1">Multi-pass membrane protein</topology>
    </subcellularLocation>
</comment>
<comment type="similarity">
    <text evidence="1">Belongs to the Ycf4 family.</text>
</comment>
<accession>A4QJU4</accession>
<dbReference type="EMBL" id="AP009368">
    <property type="protein sequence ID" value="BAF49950.1"/>
    <property type="molecule type" value="Genomic_DNA"/>
</dbReference>
<dbReference type="RefSeq" id="YP_001123126.1">
    <property type="nucleotide sequence ID" value="NC_009267.1"/>
</dbReference>
<dbReference type="GeneID" id="4962394"/>
<dbReference type="GO" id="GO:0009535">
    <property type="term" value="C:chloroplast thylakoid membrane"/>
    <property type="evidence" value="ECO:0007669"/>
    <property type="project" value="UniProtKB-SubCell"/>
</dbReference>
<dbReference type="GO" id="GO:0009522">
    <property type="term" value="C:photosystem I"/>
    <property type="evidence" value="ECO:0007669"/>
    <property type="project" value="InterPro"/>
</dbReference>
<dbReference type="GO" id="GO:0015979">
    <property type="term" value="P:photosynthesis"/>
    <property type="evidence" value="ECO:0007669"/>
    <property type="project" value="UniProtKB-UniRule"/>
</dbReference>
<dbReference type="HAMAP" id="MF_00437">
    <property type="entry name" value="Ycf4"/>
    <property type="match status" value="1"/>
</dbReference>
<dbReference type="InterPro" id="IPR003359">
    <property type="entry name" value="PSI_Ycf4_assembly"/>
</dbReference>
<dbReference type="PANTHER" id="PTHR33288">
    <property type="match status" value="1"/>
</dbReference>
<dbReference type="PANTHER" id="PTHR33288:SF4">
    <property type="entry name" value="PHOTOSYSTEM I ASSEMBLY PROTEIN YCF4"/>
    <property type="match status" value="1"/>
</dbReference>
<dbReference type="Pfam" id="PF02392">
    <property type="entry name" value="Ycf4"/>
    <property type="match status" value="1"/>
</dbReference>
<organism>
    <name type="scientific">Olimarabidopsis pumila</name>
    <name type="common">Dwarf rocket</name>
    <name type="synonym">Arabidopsis griffithiana</name>
    <dbReference type="NCBI Taxonomy" id="74718"/>
    <lineage>
        <taxon>Eukaryota</taxon>
        <taxon>Viridiplantae</taxon>
        <taxon>Streptophyta</taxon>
        <taxon>Embryophyta</taxon>
        <taxon>Tracheophyta</taxon>
        <taxon>Spermatophyta</taxon>
        <taxon>Magnoliopsida</taxon>
        <taxon>eudicotyledons</taxon>
        <taxon>Gunneridae</taxon>
        <taxon>Pentapetalae</taxon>
        <taxon>rosids</taxon>
        <taxon>malvids</taxon>
        <taxon>Brassicales</taxon>
        <taxon>Brassicaceae</taxon>
        <taxon>Alyssopsideae</taxon>
        <taxon>Olimarabidopsis</taxon>
    </lineage>
</organism>
<keyword id="KW-0150">Chloroplast</keyword>
<keyword id="KW-0472">Membrane</keyword>
<keyword id="KW-0602">Photosynthesis</keyword>
<keyword id="KW-0934">Plastid</keyword>
<keyword id="KW-0793">Thylakoid</keyword>
<keyword id="KW-0812">Transmembrane</keyword>
<keyword id="KW-1133">Transmembrane helix</keyword>
<sequence>MSWRSESIWIEFITGSRKTSNFCWAFILFLGSLGFLLVGTSSYLGRNVISLFPSQEIIFFPQGIVMSFYGIAGLFISCYLWCTILWNVGSGYDLFDRKEGIVRIFRWGFPGKSRRIFLRFFMKDIQSIRIEVKEGVSARRVLYMEIRGQGAIPLIRTDENFTTREIEQKAAELAYFLRVPIEVF</sequence>
<gene>
    <name evidence="1" type="primary">ycf4</name>
</gene>